<reference key="1">
    <citation type="journal article" date="2010" name="J. Bacteriol.">
        <title>Whole genome sequences of two Xylella fastidiosa strains (M12 and M23) causing almond leaf scorch disease in California.</title>
        <authorList>
            <person name="Chen J."/>
            <person name="Xie G."/>
            <person name="Han S."/>
            <person name="Chertkov O."/>
            <person name="Sims D."/>
            <person name="Civerolo E.L."/>
        </authorList>
    </citation>
    <scope>NUCLEOTIDE SEQUENCE [LARGE SCALE GENOMIC DNA]</scope>
    <source>
        <strain>M12</strain>
    </source>
</reference>
<protein>
    <recommendedName>
        <fullName evidence="1">Acireductone dioxygenase</fullName>
    </recommendedName>
    <alternativeName>
        <fullName evidence="1">1,2-dihydroxy-3-keto-5-methylthiopentene dioxygenase</fullName>
        <shortName evidence="1">DHK-MTPene dioxygenase</shortName>
    </alternativeName>
    <alternativeName>
        <fullName evidence="1">Acireductone dioxygenase (Fe(2+)-requiring)</fullName>
        <shortName evidence="1">ARD'</shortName>
        <shortName evidence="1">Fe-ARD</shortName>
        <ecNumber evidence="1">1.13.11.54</ecNumber>
    </alternativeName>
    <alternativeName>
        <fullName evidence="1">Acireductone dioxygenase (Ni(2+)-requiring)</fullName>
        <shortName evidence="1">ARD</shortName>
        <shortName evidence="1">Ni-ARD</shortName>
        <ecNumber evidence="1">1.13.11.53</ecNumber>
    </alternativeName>
</protein>
<sequence length="188" mass="21362">MSRLRIFDDHTPNTPFFVSKEQAQITAELHKIGITFERWEATQAIEPGATAEQVMAAYRADIDRLIATHGFKTVDVISIAPDNAKREEMRAKFLEEHFHKEDEVRFFVAGSGLFTVHSGNKVYEIECVKNDLIAIPDGTLHWFDMGAAPYFVAIRFFTEPDGWVGHFTGTDIAQRFPRYIPEGCQSAH</sequence>
<accession>B0U3A5</accession>
<organism>
    <name type="scientific">Xylella fastidiosa (strain M12)</name>
    <dbReference type="NCBI Taxonomy" id="405440"/>
    <lineage>
        <taxon>Bacteria</taxon>
        <taxon>Pseudomonadati</taxon>
        <taxon>Pseudomonadota</taxon>
        <taxon>Gammaproteobacteria</taxon>
        <taxon>Lysobacterales</taxon>
        <taxon>Lysobacteraceae</taxon>
        <taxon>Xylella</taxon>
    </lineage>
</organism>
<comment type="function">
    <text evidence="1">Catalyzes 2 different reactions between oxygen and the acireductone 1,2-dihydroxy-3-keto-5-methylthiopentene (DHK-MTPene) depending upon the metal bound in the active site. Fe-containing acireductone dioxygenase (Fe-ARD) produces formate and 2-keto-4-methylthiobutyrate (KMTB), the alpha-ketoacid precursor of methionine in the methionine recycle pathway. Ni-containing acireductone dioxygenase (Ni-ARD) produces methylthiopropionate, carbon monoxide and formate, and does not lie on the methionine recycle pathway.</text>
</comment>
<comment type="catalytic activity">
    <reaction evidence="1">
        <text>1,2-dihydroxy-5-(methylsulfanyl)pent-1-en-3-one + O2 = 3-(methylsulfanyl)propanoate + CO + formate + 2 H(+)</text>
        <dbReference type="Rhea" id="RHEA:14161"/>
        <dbReference type="ChEBI" id="CHEBI:15378"/>
        <dbReference type="ChEBI" id="CHEBI:15379"/>
        <dbReference type="ChEBI" id="CHEBI:15740"/>
        <dbReference type="ChEBI" id="CHEBI:17245"/>
        <dbReference type="ChEBI" id="CHEBI:49016"/>
        <dbReference type="ChEBI" id="CHEBI:49252"/>
        <dbReference type="EC" id="1.13.11.53"/>
    </reaction>
</comment>
<comment type="catalytic activity">
    <reaction evidence="1">
        <text>1,2-dihydroxy-5-(methylsulfanyl)pent-1-en-3-one + O2 = 4-methylsulfanyl-2-oxobutanoate + formate + 2 H(+)</text>
        <dbReference type="Rhea" id="RHEA:24504"/>
        <dbReference type="ChEBI" id="CHEBI:15378"/>
        <dbReference type="ChEBI" id="CHEBI:15379"/>
        <dbReference type="ChEBI" id="CHEBI:15740"/>
        <dbReference type="ChEBI" id="CHEBI:16723"/>
        <dbReference type="ChEBI" id="CHEBI:49252"/>
        <dbReference type="EC" id="1.13.11.54"/>
    </reaction>
</comment>
<comment type="cofactor">
    <cofactor evidence="1">
        <name>Fe(2+)</name>
        <dbReference type="ChEBI" id="CHEBI:29033"/>
    </cofactor>
    <text evidence="1">Binds 1 Fe(2+) cation per monomer.</text>
</comment>
<comment type="cofactor">
    <cofactor evidence="1">
        <name>Ni(2+)</name>
        <dbReference type="ChEBI" id="CHEBI:49786"/>
    </cofactor>
    <text evidence="1">Binds 1 nickel ion per monomer.</text>
</comment>
<comment type="pathway">
    <text evidence="1">Amino-acid biosynthesis; L-methionine biosynthesis via salvage pathway; L-methionine from S-methyl-5-thio-alpha-D-ribose 1-phosphate: step 5/6.</text>
</comment>
<comment type="subunit">
    <text evidence="1">Monomer.</text>
</comment>
<comment type="similarity">
    <text evidence="1">Belongs to the acireductone dioxygenase (ARD) family.</text>
</comment>
<gene>
    <name evidence="1" type="primary">mtnD</name>
    <name type="ordered locus">Xfasm12_1411</name>
</gene>
<dbReference type="EC" id="1.13.11.54" evidence="1"/>
<dbReference type="EC" id="1.13.11.53" evidence="1"/>
<dbReference type="EMBL" id="CP000941">
    <property type="protein sequence ID" value="ACA12334.1"/>
    <property type="molecule type" value="Genomic_DNA"/>
</dbReference>
<dbReference type="RefSeq" id="WP_012337944.1">
    <property type="nucleotide sequence ID" value="NC_010513.1"/>
</dbReference>
<dbReference type="SMR" id="B0U3A5"/>
<dbReference type="KEGG" id="xfm:Xfasm12_1411"/>
<dbReference type="HOGENOM" id="CLU_125400_0_0_6"/>
<dbReference type="UniPathway" id="UPA00904">
    <property type="reaction ID" value="UER00878"/>
</dbReference>
<dbReference type="GO" id="GO:0010308">
    <property type="term" value="F:acireductone dioxygenase (Ni2+-requiring) activity"/>
    <property type="evidence" value="ECO:0007669"/>
    <property type="project" value="UniProtKB-UniRule"/>
</dbReference>
<dbReference type="GO" id="GO:0010309">
    <property type="term" value="F:acireductone dioxygenase [iron(II)-requiring] activity"/>
    <property type="evidence" value="ECO:0007669"/>
    <property type="project" value="UniProtKB-UniRule"/>
</dbReference>
<dbReference type="GO" id="GO:0005506">
    <property type="term" value="F:iron ion binding"/>
    <property type="evidence" value="ECO:0007669"/>
    <property type="project" value="UniProtKB-UniRule"/>
</dbReference>
<dbReference type="GO" id="GO:0016151">
    <property type="term" value="F:nickel cation binding"/>
    <property type="evidence" value="ECO:0007669"/>
    <property type="project" value="UniProtKB-UniRule"/>
</dbReference>
<dbReference type="GO" id="GO:0019509">
    <property type="term" value="P:L-methionine salvage from methylthioadenosine"/>
    <property type="evidence" value="ECO:0007669"/>
    <property type="project" value="UniProtKB-UniRule"/>
</dbReference>
<dbReference type="GO" id="GO:0019284">
    <property type="term" value="P:L-methionine salvage from S-adenosylmethionine"/>
    <property type="evidence" value="ECO:0007669"/>
    <property type="project" value="InterPro"/>
</dbReference>
<dbReference type="CDD" id="cd02232">
    <property type="entry name" value="cupin_ARD"/>
    <property type="match status" value="1"/>
</dbReference>
<dbReference type="Gene3D" id="2.60.120.10">
    <property type="entry name" value="Jelly Rolls"/>
    <property type="match status" value="1"/>
</dbReference>
<dbReference type="HAMAP" id="MF_01682">
    <property type="entry name" value="Salvage_MtnD"/>
    <property type="match status" value="1"/>
</dbReference>
<dbReference type="InterPro" id="IPR004313">
    <property type="entry name" value="ARD"/>
</dbReference>
<dbReference type="InterPro" id="IPR023956">
    <property type="entry name" value="ARD_bac"/>
</dbReference>
<dbReference type="InterPro" id="IPR014710">
    <property type="entry name" value="RmlC-like_jellyroll"/>
</dbReference>
<dbReference type="InterPro" id="IPR011051">
    <property type="entry name" value="RmlC_Cupin_sf"/>
</dbReference>
<dbReference type="PANTHER" id="PTHR23418">
    <property type="entry name" value="ACIREDUCTONE DIOXYGENASE"/>
    <property type="match status" value="1"/>
</dbReference>
<dbReference type="PANTHER" id="PTHR23418:SF0">
    <property type="entry name" value="ACIREDUCTONE DIOXYGENASE"/>
    <property type="match status" value="1"/>
</dbReference>
<dbReference type="Pfam" id="PF03079">
    <property type="entry name" value="ARD"/>
    <property type="match status" value="1"/>
</dbReference>
<dbReference type="SUPFAM" id="SSF51182">
    <property type="entry name" value="RmlC-like cupins"/>
    <property type="match status" value="1"/>
</dbReference>
<proteinExistence type="inferred from homology"/>
<feature type="chain" id="PRO_0000359255" description="Acireductone dioxygenase">
    <location>
        <begin position="1"/>
        <end position="188"/>
    </location>
</feature>
<feature type="binding site" evidence="1">
    <location>
        <position position="97"/>
    </location>
    <ligand>
        <name>Fe(2+)</name>
        <dbReference type="ChEBI" id="CHEBI:29033"/>
    </ligand>
</feature>
<feature type="binding site" evidence="1">
    <location>
        <position position="97"/>
    </location>
    <ligand>
        <name>Ni(2+)</name>
        <dbReference type="ChEBI" id="CHEBI:49786"/>
    </ligand>
</feature>
<feature type="binding site" evidence="1">
    <location>
        <position position="99"/>
    </location>
    <ligand>
        <name>Fe(2+)</name>
        <dbReference type="ChEBI" id="CHEBI:29033"/>
    </ligand>
</feature>
<feature type="binding site" evidence="1">
    <location>
        <position position="99"/>
    </location>
    <ligand>
        <name>Ni(2+)</name>
        <dbReference type="ChEBI" id="CHEBI:49786"/>
    </ligand>
</feature>
<feature type="binding site" evidence="1">
    <location>
        <position position="103"/>
    </location>
    <ligand>
        <name>Fe(2+)</name>
        <dbReference type="ChEBI" id="CHEBI:29033"/>
    </ligand>
</feature>
<feature type="binding site" evidence="1">
    <location>
        <position position="103"/>
    </location>
    <ligand>
        <name>Ni(2+)</name>
        <dbReference type="ChEBI" id="CHEBI:49786"/>
    </ligand>
</feature>
<feature type="binding site" evidence="1">
    <location>
        <position position="141"/>
    </location>
    <ligand>
        <name>Fe(2+)</name>
        <dbReference type="ChEBI" id="CHEBI:29033"/>
    </ligand>
</feature>
<feature type="binding site" evidence="1">
    <location>
        <position position="141"/>
    </location>
    <ligand>
        <name>Ni(2+)</name>
        <dbReference type="ChEBI" id="CHEBI:49786"/>
    </ligand>
</feature>
<feature type="site" description="May play a role in metal incorporation in vivo" evidence="1">
    <location>
        <position position="96"/>
    </location>
</feature>
<feature type="site" description="May play a role in transmitting local conformational changes" evidence="1">
    <location>
        <position position="102"/>
    </location>
</feature>
<feature type="site" description="Important to generate the dianion" evidence="1">
    <location>
        <position position="105"/>
    </location>
</feature>
<evidence type="ECO:0000255" key="1">
    <source>
        <dbReference type="HAMAP-Rule" id="MF_01682"/>
    </source>
</evidence>
<keyword id="KW-0028">Amino-acid biosynthesis</keyword>
<keyword id="KW-0223">Dioxygenase</keyword>
<keyword id="KW-0408">Iron</keyword>
<keyword id="KW-0479">Metal-binding</keyword>
<keyword id="KW-0486">Methionine biosynthesis</keyword>
<keyword id="KW-0533">Nickel</keyword>
<keyword id="KW-0560">Oxidoreductase</keyword>
<name>MTND_XYLFM</name>